<name>KCY_STAEQ</name>
<dbReference type="EC" id="2.7.4.25" evidence="1"/>
<dbReference type="EMBL" id="CP000029">
    <property type="protein sequence ID" value="AAW54450.1"/>
    <property type="molecule type" value="Genomic_DNA"/>
</dbReference>
<dbReference type="RefSeq" id="WP_001830943.1">
    <property type="nucleotide sequence ID" value="NC_002976.3"/>
</dbReference>
<dbReference type="SMR" id="Q5HP68"/>
<dbReference type="STRING" id="176279.SERP1045"/>
<dbReference type="GeneID" id="50018714"/>
<dbReference type="KEGG" id="ser:SERP1045"/>
<dbReference type="eggNOG" id="COG0283">
    <property type="taxonomic scope" value="Bacteria"/>
</dbReference>
<dbReference type="HOGENOM" id="CLU_079959_0_2_9"/>
<dbReference type="Proteomes" id="UP000000531">
    <property type="component" value="Chromosome"/>
</dbReference>
<dbReference type="GO" id="GO:0005829">
    <property type="term" value="C:cytosol"/>
    <property type="evidence" value="ECO:0007669"/>
    <property type="project" value="TreeGrafter"/>
</dbReference>
<dbReference type="GO" id="GO:0005524">
    <property type="term" value="F:ATP binding"/>
    <property type="evidence" value="ECO:0007669"/>
    <property type="project" value="UniProtKB-UniRule"/>
</dbReference>
<dbReference type="GO" id="GO:0036430">
    <property type="term" value="F:CMP kinase activity"/>
    <property type="evidence" value="ECO:0007669"/>
    <property type="project" value="RHEA"/>
</dbReference>
<dbReference type="GO" id="GO:0036431">
    <property type="term" value="F:dCMP kinase activity"/>
    <property type="evidence" value="ECO:0007669"/>
    <property type="project" value="RHEA"/>
</dbReference>
<dbReference type="GO" id="GO:0015949">
    <property type="term" value="P:nucleobase-containing small molecule interconversion"/>
    <property type="evidence" value="ECO:0007669"/>
    <property type="project" value="TreeGrafter"/>
</dbReference>
<dbReference type="GO" id="GO:0006220">
    <property type="term" value="P:pyrimidine nucleotide metabolic process"/>
    <property type="evidence" value="ECO:0007669"/>
    <property type="project" value="UniProtKB-UniRule"/>
</dbReference>
<dbReference type="CDD" id="cd02020">
    <property type="entry name" value="CMPK"/>
    <property type="match status" value="1"/>
</dbReference>
<dbReference type="Gene3D" id="3.40.50.300">
    <property type="entry name" value="P-loop containing nucleotide triphosphate hydrolases"/>
    <property type="match status" value="1"/>
</dbReference>
<dbReference type="HAMAP" id="MF_00238">
    <property type="entry name" value="Cytidyl_kinase_type1"/>
    <property type="match status" value="1"/>
</dbReference>
<dbReference type="InterPro" id="IPR003136">
    <property type="entry name" value="Cytidylate_kin"/>
</dbReference>
<dbReference type="InterPro" id="IPR011994">
    <property type="entry name" value="Cytidylate_kinase_dom"/>
</dbReference>
<dbReference type="InterPro" id="IPR027417">
    <property type="entry name" value="P-loop_NTPase"/>
</dbReference>
<dbReference type="NCBIfam" id="TIGR00017">
    <property type="entry name" value="cmk"/>
    <property type="match status" value="1"/>
</dbReference>
<dbReference type="PANTHER" id="PTHR21299:SF2">
    <property type="entry name" value="CYTIDYLATE KINASE"/>
    <property type="match status" value="1"/>
</dbReference>
<dbReference type="PANTHER" id="PTHR21299">
    <property type="entry name" value="CYTIDYLATE KINASE/PANTOATE-BETA-ALANINE LIGASE"/>
    <property type="match status" value="1"/>
</dbReference>
<dbReference type="Pfam" id="PF02224">
    <property type="entry name" value="Cytidylate_kin"/>
    <property type="match status" value="1"/>
</dbReference>
<dbReference type="SUPFAM" id="SSF52540">
    <property type="entry name" value="P-loop containing nucleoside triphosphate hydrolases"/>
    <property type="match status" value="1"/>
</dbReference>
<feature type="chain" id="PRO_0000131979" description="Cytidylate kinase">
    <location>
        <begin position="1"/>
        <end position="215"/>
    </location>
</feature>
<feature type="binding site" evidence="1">
    <location>
        <begin position="10"/>
        <end position="18"/>
    </location>
    <ligand>
        <name>ATP</name>
        <dbReference type="ChEBI" id="CHEBI:30616"/>
    </ligand>
</feature>
<evidence type="ECO:0000255" key="1">
    <source>
        <dbReference type="HAMAP-Rule" id="MF_00238"/>
    </source>
</evidence>
<gene>
    <name evidence="1" type="primary">cmk</name>
    <name type="ordered locus">SERP1045</name>
</gene>
<proteinExistence type="inferred from homology"/>
<sequence>MSSINIALDGPAAAGKSTIAKRVASRLSMIYVDTGAMYRAITYKYLQNGKPENFDYLINNTKLELTYDEVKGQRILLDNQDVTDYLRENDVTHHVSYVASKEPVRSFAVKIQKELAAKKGIVMDGRDIGTVVLPDAELKVYMIASVAERAERRQKENEQRGIESNLEQLKEEIEARDHYDMNREISPLQKAEDAITLDTTGKSIEEVTNEILSLL</sequence>
<keyword id="KW-0067">ATP-binding</keyword>
<keyword id="KW-0963">Cytoplasm</keyword>
<keyword id="KW-0418">Kinase</keyword>
<keyword id="KW-0547">Nucleotide-binding</keyword>
<keyword id="KW-1185">Reference proteome</keyword>
<keyword id="KW-0808">Transferase</keyword>
<reference key="1">
    <citation type="journal article" date="2005" name="J. Bacteriol.">
        <title>Insights on evolution of virulence and resistance from the complete genome analysis of an early methicillin-resistant Staphylococcus aureus strain and a biofilm-producing methicillin-resistant Staphylococcus epidermidis strain.</title>
        <authorList>
            <person name="Gill S.R."/>
            <person name="Fouts D.E."/>
            <person name="Archer G.L."/>
            <person name="Mongodin E.F."/>
            <person name="DeBoy R.T."/>
            <person name="Ravel J."/>
            <person name="Paulsen I.T."/>
            <person name="Kolonay J.F."/>
            <person name="Brinkac L.M."/>
            <person name="Beanan M.J."/>
            <person name="Dodson R.J."/>
            <person name="Daugherty S.C."/>
            <person name="Madupu R."/>
            <person name="Angiuoli S.V."/>
            <person name="Durkin A.S."/>
            <person name="Haft D.H."/>
            <person name="Vamathevan J.J."/>
            <person name="Khouri H."/>
            <person name="Utterback T.R."/>
            <person name="Lee C."/>
            <person name="Dimitrov G."/>
            <person name="Jiang L."/>
            <person name="Qin H."/>
            <person name="Weidman J."/>
            <person name="Tran K."/>
            <person name="Kang K.H."/>
            <person name="Hance I.R."/>
            <person name="Nelson K.E."/>
            <person name="Fraser C.M."/>
        </authorList>
    </citation>
    <scope>NUCLEOTIDE SEQUENCE [LARGE SCALE GENOMIC DNA]</scope>
    <source>
        <strain>ATCC 35984 / DSM 28319 / BCRC 17069 / CCUG 31568 / BM 3577 / RP62A</strain>
    </source>
</reference>
<organism>
    <name type="scientific">Staphylococcus epidermidis (strain ATCC 35984 / DSM 28319 / BCRC 17069 / CCUG 31568 / BM 3577 / RP62A)</name>
    <dbReference type="NCBI Taxonomy" id="176279"/>
    <lineage>
        <taxon>Bacteria</taxon>
        <taxon>Bacillati</taxon>
        <taxon>Bacillota</taxon>
        <taxon>Bacilli</taxon>
        <taxon>Bacillales</taxon>
        <taxon>Staphylococcaceae</taxon>
        <taxon>Staphylococcus</taxon>
    </lineage>
</organism>
<accession>Q5HP68</accession>
<protein>
    <recommendedName>
        <fullName evidence="1">Cytidylate kinase</fullName>
        <shortName evidence="1">CK</shortName>
        <ecNumber evidence="1">2.7.4.25</ecNumber>
    </recommendedName>
    <alternativeName>
        <fullName evidence="1">Cytidine monophosphate kinase</fullName>
        <shortName evidence="1">CMP kinase</shortName>
    </alternativeName>
</protein>
<comment type="catalytic activity">
    <reaction evidence="1">
        <text>CMP + ATP = CDP + ADP</text>
        <dbReference type="Rhea" id="RHEA:11600"/>
        <dbReference type="ChEBI" id="CHEBI:30616"/>
        <dbReference type="ChEBI" id="CHEBI:58069"/>
        <dbReference type="ChEBI" id="CHEBI:60377"/>
        <dbReference type="ChEBI" id="CHEBI:456216"/>
        <dbReference type="EC" id="2.7.4.25"/>
    </reaction>
</comment>
<comment type="catalytic activity">
    <reaction evidence="1">
        <text>dCMP + ATP = dCDP + ADP</text>
        <dbReference type="Rhea" id="RHEA:25094"/>
        <dbReference type="ChEBI" id="CHEBI:30616"/>
        <dbReference type="ChEBI" id="CHEBI:57566"/>
        <dbReference type="ChEBI" id="CHEBI:58593"/>
        <dbReference type="ChEBI" id="CHEBI:456216"/>
        <dbReference type="EC" id="2.7.4.25"/>
    </reaction>
</comment>
<comment type="subcellular location">
    <subcellularLocation>
        <location evidence="1">Cytoplasm</location>
    </subcellularLocation>
</comment>
<comment type="similarity">
    <text evidence="1">Belongs to the cytidylate kinase family. Type 1 subfamily.</text>
</comment>